<dbReference type="EMBL" id="Z68203">
    <property type="protein sequence ID" value="CAA92399.1"/>
    <property type="molecule type" value="Genomic_DNA"/>
</dbReference>
<dbReference type="EMBL" id="U00090">
    <property type="protein sequence ID" value="AAB91870.1"/>
    <property type="molecule type" value="Genomic_DNA"/>
</dbReference>
<dbReference type="RefSeq" id="NP_444083.1">
    <property type="nucleotide sequence ID" value="NC_000914.2"/>
</dbReference>
<dbReference type="RefSeq" id="WP_010875180.1">
    <property type="nucleotide sequence ID" value="NC_000914.2"/>
</dbReference>
<dbReference type="SMR" id="Q53192"/>
<dbReference type="KEGG" id="rhi:NGR_a01420"/>
<dbReference type="PATRIC" id="fig|394.7.peg.128"/>
<dbReference type="eggNOG" id="COG1173">
    <property type="taxonomic scope" value="Bacteria"/>
</dbReference>
<dbReference type="HOGENOM" id="CLU_028518_1_1_5"/>
<dbReference type="OrthoDB" id="9805884at2"/>
<dbReference type="Proteomes" id="UP000001054">
    <property type="component" value="Plasmid pNGR234a"/>
</dbReference>
<dbReference type="GO" id="GO:0005886">
    <property type="term" value="C:plasma membrane"/>
    <property type="evidence" value="ECO:0007669"/>
    <property type="project" value="UniProtKB-SubCell"/>
</dbReference>
<dbReference type="GO" id="GO:0006865">
    <property type="term" value="P:amino acid transport"/>
    <property type="evidence" value="ECO:0007669"/>
    <property type="project" value="UniProtKB-KW"/>
</dbReference>
<dbReference type="GO" id="GO:0055085">
    <property type="term" value="P:transmembrane transport"/>
    <property type="evidence" value="ECO:0007669"/>
    <property type="project" value="InterPro"/>
</dbReference>
<dbReference type="CDD" id="cd06261">
    <property type="entry name" value="TM_PBP2"/>
    <property type="match status" value="1"/>
</dbReference>
<dbReference type="Gene3D" id="1.10.3720.10">
    <property type="entry name" value="MetI-like"/>
    <property type="match status" value="1"/>
</dbReference>
<dbReference type="InterPro" id="IPR050366">
    <property type="entry name" value="BP-dependent_transpt_permease"/>
</dbReference>
<dbReference type="InterPro" id="IPR000515">
    <property type="entry name" value="MetI-like"/>
</dbReference>
<dbReference type="InterPro" id="IPR035906">
    <property type="entry name" value="MetI-like_sf"/>
</dbReference>
<dbReference type="InterPro" id="IPR025966">
    <property type="entry name" value="OppC_N"/>
</dbReference>
<dbReference type="PANTHER" id="PTHR43386:SF6">
    <property type="entry name" value="ABC TRANSPORTER PERMEASE PROTEIN"/>
    <property type="match status" value="1"/>
</dbReference>
<dbReference type="PANTHER" id="PTHR43386">
    <property type="entry name" value="OLIGOPEPTIDE TRANSPORT SYSTEM PERMEASE PROTEIN APPC"/>
    <property type="match status" value="1"/>
</dbReference>
<dbReference type="Pfam" id="PF00528">
    <property type="entry name" value="BPD_transp_1"/>
    <property type="match status" value="1"/>
</dbReference>
<dbReference type="Pfam" id="PF12911">
    <property type="entry name" value="OppC_N"/>
    <property type="match status" value="1"/>
</dbReference>
<dbReference type="SUPFAM" id="SSF161098">
    <property type="entry name" value="MetI-like"/>
    <property type="match status" value="1"/>
</dbReference>
<dbReference type="PROSITE" id="PS50928">
    <property type="entry name" value="ABC_TM1"/>
    <property type="match status" value="1"/>
</dbReference>
<keyword id="KW-0029">Amino-acid transport</keyword>
<keyword id="KW-0997">Cell inner membrane</keyword>
<keyword id="KW-1003">Cell membrane</keyword>
<keyword id="KW-0472">Membrane</keyword>
<keyword id="KW-0614">Plasmid</keyword>
<keyword id="KW-1185">Reference proteome</keyword>
<keyword id="KW-0812">Transmembrane</keyword>
<keyword id="KW-1133">Transmembrane helix</keyword>
<keyword id="KW-0813">Transport</keyword>
<sequence length="291" mass="30910">MALTTSRASGSPRIQTHTVVRIAKRHPLVLLGGGILLLLILLALAAPLYSGDPLVMDPFKRLQQPSASMWFGTDNLGRDVFARTIYGARISLIVGLLSAVCAAVCGLLIGVIAGYSRTFDNIIMRVMDGLMSIPTFLLAIALLSLTGPGIGILIVAIAIPETPAVTRLVRSVVLSVRSRPYVEAALCGGARLPRVLWRHILPSTIPPLMVQSATVCASAIMTEAGLSFIGVGVPSEIPSWGNMIANSRLFLAIAPLTIFAPGLCLAVTVLAVNLLGDGLRDMFDPRSKRRR</sequence>
<organism>
    <name type="scientific">Sinorhizobium fredii (strain NBRC 101917 / NGR234)</name>
    <dbReference type="NCBI Taxonomy" id="394"/>
    <lineage>
        <taxon>Bacteria</taxon>
        <taxon>Pseudomonadati</taxon>
        <taxon>Pseudomonadota</taxon>
        <taxon>Alphaproteobacteria</taxon>
        <taxon>Hyphomicrobiales</taxon>
        <taxon>Rhizobiaceae</taxon>
        <taxon>Sinorhizobium/Ensifer group</taxon>
        <taxon>Sinorhizobium</taxon>
    </lineage>
</organism>
<name>Y4TQ_SINFN</name>
<comment type="function">
    <text>Probably part of the binding-protein-dependent transport system y4tOPQRS for a peptide. Probably responsible for the translocation of the substrate across the membrane.</text>
</comment>
<comment type="subcellular location">
    <subcellularLocation>
        <location evidence="2">Cell inner membrane</location>
        <topology evidence="1">Multi-pass membrane protein</topology>
    </subcellularLocation>
</comment>
<comment type="similarity">
    <text evidence="2">Belongs to the binding-protein-dependent transport system permease family. OppBC subfamily.</text>
</comment>
<evidence type="ECO:0000255" key="1">
    <source>
        <dbReference type="PROSITE-ProRule" id="PRU00441"/>
    </source>
</evidence>
<evidence type="ECO:0000305" key="2"/>
<feature type="chain" id="PRO_0000060300" description="Probable peptide ABC transporter permease protein y4tQ">
    <location>
        <begin position="1"/>
        <end position="291"/>
    </location>
</feature>
<feature type="transmembrane region" description="Helical" evidence="1">
    <location>
        <begin position="28"/>
        <end position="48"/>
    </location>
</feature>
<feature type="transmembrane region" description="Helical" evidence="1">
    <location>
        <begin position="92"/>
        <end position="112"/>
    </location>
</feature>
<feature type="transmembrane region" description="Helical" evidence="1">
    <location>
        <begin position="137"/>
        <end position="157"/>
    </location>
</feature>
<feature type="transmembrane region" description="Helical" evidence="1">
    <location>
        <begin position="213"/>
        <end position="233"/>
    </location>
</feature>
<feature type="transmembrane region" description="Helical" evidence="1">
    <location>
        <begin position="249"/>
        <end position="269"/>
    </location>
</feature>
<feature type="domain" description="ABC transmembrane type-1" evidence="1">
    <location>
        <begin position="88"/>
        <end position="276"/>
    </location>
</feature>
<reference key="1">
    <citation type="journal article" date="1996" name="Genome Res.">
        <title>Sequencing the 500-kb GC-rich symbiotic replicon of Rhizobium sp. NGR234 using dye terminators and a thermostable 'sequenase': a beginning.</title>
        <authorList>
            <person name="Freiberg C."/>
            <person name="Perret X."/>
            <person name="Broughton W.J."/>
            <person name="Rosenthal A."/>
        </authorList>
    </citation>
    <scope>NUCLEOTIDE SEQUENCE [GENOMIC DNA]</scope>
</reference>
<reference key="2">
    <citation type="journal article" date="1997" name="Nature">
        <title>Molecular basis of symbiosis between Rhizobium and legumes.</title>
        <authorList>
            <person name="Freiberg C.A."/>
            <person name="Fellay R."/>
            <person name="Bairoch A."/>
            <person name="Broughton W.J."/>
            <person name="Rosenthal A."/>
            <person name="Perret X."/>
        </authorList>
    </citation>
    <scope>NUCLEOTIDE SEQUENCE [LARGE SCALE GENOMIC DNA]</scope>
    <source>
        <strain>NBRC 101917 / NGR234</strain>
    </source>
</reference>
<reference key="3">
    <citation type="journal article" date="2009" name="Appl. Environ. Microbiol.">
        <title>Rhizobium sp. strain NGR234 possesses a remarkable number of secretion systems.</title>
        <authorList>
            <person name="Schmeisser C."/>
            <person name="Liesegang H."/>
            <person name="Krysciak D."/>
            <person name="Bakkou N."/>
            <person name="Le Quere A."/>
            <person name="Wollherr A."/>
            <person name="Heinemeyer I."/>
            <person name="Morgenstern B."/>
            <person name="Pommerening-Roeser A."/>
            <person name="Flores M."/>
            <person name="Palacios R."/>
            <person name="Brenner S."/>
            <person name="Gottschalk G."/>
            <person name="Schmitz R.A."/>
            <person name="Broughton W.J."/>
            <person name="Perret X."/>
            <person name="Strittmatter A.W."/>
            <person name="Streit W.R."/>
        </authorList>
    </citation>
    <scope>NUCLEOTIDE SEQUENCE [LARGE SCALE GENOMIC DNA]</scope>
    <source>
        <strain>NBRC 101917 / NGR234</strain>
    </source>
</reference>
<geneLocation type="plasmid">
    <name>sym pNGR234a</name>
</geneLocation>
<gene>
    <name type="ordered locus">NGR_a01420</name>
    <name type="ORF">y4tQ</name>
</gene>
<proteinExistence type="inferred from homology"/>
<accession>Q53192</accession>
<protein>
    <recommendedName>
        <fullName>Probable peptide ABC transporter permease protein y4tQ</fullName>
    </recommendedName>
</protein>